<dbReference type="EMBL" id="AB008782">
    <property type="protein sequence ID" value="BAA23424.1"/>
    <property type="molecule type" value="mRNA"/>
</dbReference>
<dbReference type="EMBL" id="AL391710">
    <property type="protein sequence ID" value="CAC05432.1"/>
    <property type="molecule type" value="Genomic_DNA"/>
</dbReference>
<dbReference type="EMBL" id="AB006704">
    <property type="protein sequence ID" value="BAB17026.1"/>
    <property type="molecule type" value="Genomic_DNA"/>
</dbReference>
<dbReference type="EMBL" id="CP002688">
    <property type="protein sequence ID" value="AED91910.1"/>
    <property type="molecule type" value="Genomic_DNA"/>
</dbReference>
<dbReference type="EMBL" id="AK119047">
    <property type="protein sequence ID" value="BAC43623.1"/>
    <property type="status" value="ALT_SEQ"/>
    <property type="molecule type" value="mRNA"/>
</dbReference>
<dbReference type="RefSeq" id="NP_196859.1">
    <property type="nucleotide sequence ID" value="NM_121358.3"/>
</dbReference>
<dbReference type="PDB" id="7LHV">
    <property type="method" value="EM"/>
    <property type="resolution" value="2.75 A"/>
    <property type="chains" value="A/B=1-685"/>
</dbReference>
<dbReference type="PDBsum" id="7LHV"/>
<dbReference type="EMDB" id="EMD-23351"/>
<dbReference type="SMR" id="Q9FY46"/>
<dbReference type="BioGRID" id="16477">
    <property type="interactions" value="1"/>
</dbReference>
<dbReference type="FunCoup" id="Q9FY46">
    <property type="interactions" value="1479"/>
</dbReference>
<dbReference type="IntAct" id="Q9FY46">
    <property type="interactions" value="2"/>
</dbReference>
<dbReference type="STRING" id="3702.Q9FY46"/>
<dbReference type="TCDB" id="2.A.53.1.14">
    <property type="family name" value="the sulfate permease (sulp) family"/>
</dbReference>
<dbReference type="iPTMnet" id="Q9FY46"/>
<dbReference type="PaxDb" id="3702-AT5G13550.1"/>
<dbReference type="ProteomicsDB" id="226832"/>
<dbReference type="EnsemblPlants" id="AT5G13550.1">
    <property type="protein sequence ID" value="AT5G13550.1"/>
    <property type="gene ID" value="AT5G13550"/>
</dbReference>
<dbReference type="GeneID" id="831199"/>
<dbReference type="Gramene" id="AT5G13550.1">
    <property type="protein sequence ID" value="AT5G13550.1"/>
    <property type="gene ID" value="AT5G13550"/>
</dbReference>
<dbReference type="KEGG" id="ath:AT5G13550"/>
<dbReference type="Araport" id="AT5G13550"/>
<dbReference type="TAIR" id="AT5G13550">
    <property type="gene designation" value="SULTR4"/>
</dbReference>
<dbReference type="eggNOG" id="KOG0236">
    <property type="taxonomic scope" value="Eukaryota"/>
</dbReference>
<dbReference type="HOGENOM" id="CLU_003182_13_2_1"/>
<dbReference type="InParanoid" id="Q9FY46"/>
<dbReference type="OMA" id="PALYWIP"/>
<dbReference type="OrthoDB" id="288203at2759"/>
<dbReference type="PhylomeDB" id="Q9FY46"/>
<dbReference type="PRO" id="PR:Q9FY46"/>
<dbReference type="Proteomes" id="UP000006548">
    <property type="component" value="Chromosome 5"/>
</dbReference>
<dbReference type="ExpressionAtlas" id="Q9FY46">
    <property type="expression patterns" value="baseline and differential"/>
</dbReference>
<dbReference type="GO" id="GO:0031969">
    <property type="term" value="C:chloroplast membrane"/>
    <property type="evidence" value="ECO:0007669"/>
    <property type="project" value="UniProtKB-SubCell"/>
</dbReference>
<dbReference type="GO" id="GO:0008271">
    <property type="term" value="F:secondary active sulfate transmembrane transporter activity"/>
    <property type="evidence" value="ECO:0007669"/>
    <property type="project" value="InterPro"/>
</dbReference>
<dbReference type="GO" id="GO:0015293">
    <property type="term" value="F:symporter activity"/>
    <property type="evidence" value="ECO:0007669"/>
    <property type="project" value="UniProtKB-KW"/>
</dbReference>
<dbReference type="CDD" id="cd07042">
    <property type="entry name" value="STAS_SulP_like_sulfate_transporter"/>
    <property type="match status" value="1"/>
</dbReference>
<dbReference type="FunFam" id="3.30.750.24:FF:000002">
    <property type="entry name" value="Sulfate transporter 31"/>
    <property type="match status" value="1"/>
</dbReference>
<dbReference type="Gene3D" id="3.30.750.24">
    <property type="entry name" value="STAS domain"/>
    <property type="match status" value="1"/>
</dbReference>
<dbReference type="InterPro" id="IPR018045">
    <property type="entry name" value="S04_transporter_CS"/>
</dbReference>
<dbReference type="InterPro" id="IPR011547">
    <property type="entry name" value="SLC26A/SulP_dom"/>
</dbReference>
<dbReference type="InterPro" id="IPR001902">
    <property type="entry name" value="SLC26A/SulP_fam"/>
</dbReference>
<dbReference type="InterPro" id="IPR002645">
    <property type="entry name" value="STAS_dom"/>
</dbReference>
<dbReference type="InterPro" id="IPR036513">
    <property type="entry name" value="STAS_dom_sf"/>
</dbReference>
<dbReference type="NCBIfam" id="TIGR00815">
    <property type="entry name" value="sulP"/>
    <property type="match status" value="1"/>
</dbReference>
<dbReference type="PANTHER" id="PTHR11814">
    <property type="entry name" value="SULFATE TRANSPORTER"/>
    <property type="match status" value="1"/>
</dbReference>
<dbReference type="Pfam" id="PF01740">
    <property type="entry name" value="STAS"/>
    <property type="match status" value="1"/>
</dbReference>
<dbReference type="Pfam" id="PF00916">
    <property type="entry name" value="Sulfate_transp"/>
    <property type="match status" value="1"/>
</dbReference>
<dbReference type="SUPFAM" id="SSF52091">
    <property type="entry name" value="SpoIIaa-like"/>
    <property type="match status" value="1"/>
</dbReference>
<dbReference type="PROSITE" id="PS01130">
    <property type="entry name" value="SLC26A"/>
    <property type="match status" value="1"/>
</dbReference>
<dbReference type="PROSITE" id="PS50801">
    <property type="entry name" value="STAS"/>
    <property type="match status" value="1"/>
</dbReference>
<reference key="1">
    <citation type="journal article" date="1999" name="J. Exp. Bot.">
        <title>Cloning of an Arabidopsis cDNA encoding a chloroplast localizing sulphate transporter isoform.</title>
        <authorList>
            <person name="Takahashi H."/>
            <person name="Asanuma W."/>
            <person name="Saito K."/>
        </authorList>
    </citation>
    <scope>NUCLEOTIDE SEQUENCE</scope>
    <source>
        <strain>cv. Columbia</strain>
    </source>
</reference>
<reference key="2">
    <citation type="journal article" date="2000" name="Nature">
        <title>Sequence and analysis of chromosome 5 of the plant Arabidopsis thaliana.</title>
        <authorList>
            <person name="Tabata S."/>
            <person name="Kaneko T."/>
            <person name="Nakamura Y."/>
            <person name="Kotani H."/>
            <person name="Kato T."/>
            <person name="Asamizu E."/>
            <person name="Miyajima N."/>
            <person name="Sasamoto S."/>
            <person name="Kimura T."/>
            <person name="Hosouchi T."/>
            <person name="Kawashima K."/>
            <person name="Kohara M."/>
            <person name="Matsumoto M."/>
            <person name="Matsuno A."/>
            <person name="Muraki A."/>
            <person name="Nakayama S."/>
            <person name="Nakazaki N."/>
            <person name="Naruo K."/>
            <person name="Okumura S."/>
            <person name="Shinpo S."/>
            <person name="Takeuchi C."/>
            <person name="Wada T."/>
            <person name="Watanabe A."/>
            <person name="Yamada M."/>
            <person name="Yasuda M."/>
            <person name="Sato S."/>
            <person name="de la Bastide M."/>
            <person name="Huang E."/>
            <person name="Spiegel L."/>
            <person name="Gnoj L."/>
            <person name="O'Shaughnessy A."/>
            <person name="Preston R."/>
            <person name="Habermann K."/>
            <person name="Murray J."/>
            <person name="Johnson D."/>
            <person name="Rohlfing T."/>
            <person name="Nelson J."/>
            <person name="Stoneking T."/>
            <person name="Pepin K."/>
            <person name="Spieth J."/>
            <person name="Sekhon M."/>
            <person name="Armstrong J."/>
            <person name="Becker M."/>
            <person name="Belter E."/>
            <person name="Cordum H."/>
            <person name="Cordes M."/>
            <person name="Courtney L."/>
            <person name="Courtney W."/>
            <person name="Dante M."/>
            <person name="Du H."/>
            <person name="Edwards J."/>
            <person name="Fryman J."/>
            <person name="Haakensen B."/>
            <person name="Lamar E."/>
            <person name="Latreille P."/>
            <person name="Leonard S."/>
            <person name="Meyer R."/>
            <person name="Mulvaney E."/>
            <person name="Ozersky P."/>
            <person name="Riley A."/>
            <person name="Strowmatt C."/>
            <person name="Wagner-McPherson C."/>
            <person name="Wollam A."/>
            <person name="Yoakum M."/>
            <person name="Bell M."/>
            <person name="Dedhia N."/>
            <person name="Parnell L."/>
            <person name="Shah R."/>
            <person name="Rodriguez M."/>
            <person name="Hoon See L."/>
            <person name="Vil D."/>
            <person name="Baker J."/>
            <person name="Kirchoff K."/>
            <person name="Toth K."/>
            <person name="King L."/>
            <person name="Bahret A."/>
            <person name="Miller B."/>
            <person name="Marra M.A."/>
            <person name="Martienssen R."/>
            <person name="McCombie W.R."/>
            <person name="Wilson R.K."/>
            <person name="Murphy G."/>
            <person name="Bancroft I."/>
            <person name="Volckaert G."/>
            <person name="Wambutt R."/>
            <person name="Duesterhoeft A."/>
            <person name="Stiekema W."/>
            <person name="Pohl T."/>
            <person name="Entian K.-D."/>
            <person name="Terryn N."/>
            <person name="Hartley N."/>
            <person name="Bent E."/>
            <person name="Johnson S."/>
            <person name="Langham S.-A."/>
            <person name="McCullagh B."/>
            <person name="Robben J."/>
            <person name="Grymonprez B."/>
            <person name="Zimmermann W."/>
            <person name="Ramsperger U."/>
            <person name="Wedler H."/>
            <person name="Balke K."/>
            <person name="Wedler E."/>
            <person name="Peters S."/>
            <person name="van Staveren M."/>
            <person name="Dirkse W."/>
            <person name="Mooijman P."/>
            <person name="Klein Lankhorst R."/>
            <person name="Weitzenegger T."/>
            <person name="Bothe G."/>
            <person name="Rose M."/>
            <person name="Hauf J."/>
            <person name="Berneiser S."/>
            <person name="Hempel S."/>
            <person name="Feldpausch M."/>
            <person name="Lamberth S."/>
            <person name="Villarroel R."/>
            <person name="Gielen J."/>
            <person name="Ardiles W."/>
            <person name="Bents O."/>
            <person name="Lemcke K."/>
            <person name="Kolesov G."/>
            <person name="Mayer K.F.X."/>
            <person name="Rudd S."/>
            <person name="Schoof H."/>
            <person name="Schueller C."/>
            <person name="Zaccaria P."/>
            <person name="Mewes H.-W."/>
            <person name="Bevan M."/>
            <person name="Fransz P.F."/>
        </authorList>
    </citation>
    <scope>NUCLEOTIDE SEQUENCE [LARGE SCALE GENOMIC DNA]</scope>
    <source>
        <strain>cv. Columbia</strain>
    </source>
</reference>
<reference key="3">
    <citation type="journal article" date="1997" name="DNA Res.">
        <title>Structural analysis of Arabidopsis thaliana chromosome 5. II. Sequence features of the regions of 1,044,062 bp covered by thirteen physically assigned P1 clones.</title>
        <authorList>
            <person name="Kotani H."/>
            <person name="Nakamura Y."/>
            <person name="Sato S."/>
            <person name="Kaneko T."/>
            <person name="Asamizu E."/>
            <person name="Miyajima N."/>
            <person name="Tabata S."/>
        </authorList>
    </citation>
    <scope>NUCLEOTIDE SEQUENCE [LARGE SCALE GENOMIC DNA] OF 1-389</scope>
    <source>
        <strain>cv. Columbia</strain>
    </source>
</reference>
<reference key="4">
    <citation type="journal article" date="2017" name="Plant J.">
        <title>Araport11: a complete reannotation of the Arabidopsis thaliana reference genome.</title>
        <authorList>
            <person name="Cheng C.Y."/>
            <person name="Krishnakumar V."/>
            <person name="Chan A.P."/>
            <person name="Thibaud-Nissen F."/>
            <person name="Schobel S."/>
            <person name="Town C.D."/>
        </authorList>
    </citation>
    <scope>GENOME REANNOTATION</scope>
    <source>
        <strain>cv. Columbia</strain>
    </source>
</reference>
<reference key="5">
    <citation type="journal article" date="2002" name="Science">
        <title>Functional annotation of a full-length Arabidopsis cDNA collection.</title>
        <authorList>
            <person name="Seki M."/>
            <person name="Narusaka M."/>
            <person name="Kamiya A."/>
            <person name="Ishida J."/>
            <person name="Satou M."/>
            <person name="Sakurai T."/>
            <person name="Nakajima M."/>
            <person name="Enju A."/>
            <person name="Akiyama K."/>
            <person name="Oono Y."/>
            <person name="Muramatsu M."/>
            <person name="Hayashizaki Y."/>
            <person name="Kawai J."/>
            <person name="Carninci P."/>
            <person name="Itoh M."/>
            <person name="Ishii Y."/>
            <person name="Arakawa T."/>
            <person name="Shibata K."/>
            <person name="Shinagawa A."/>
            <person name="Shinozaki K."/>
        </authorList>
    </citation>
    <scope>NUCLEOTIDE SEQUENCE [LARGE SCALE MRNA]</scope>
    <source>
        <strain>cv. Columbia</strain>
    </source>
</reference>
<reference key="6">
    <citation type="journal article" date="2000" name="Plant J.">
        <title>The roles of three functional sulphate transporters involved in uptake and translocation of sulphate in Arabidopsis thaliana.</title>
        <authorList>
            <person name="Takahashi H."/>
            <person name="Watanabe-Takahashi A."/>
            <person name="Smith F.W."/>
            <person name="Blake-Kalff M."/>
            <person name="Hawkesford M.J."/>
            <person name="Saito K."/>
        </authorList>
    </citation>
    <scope>INDUCTION</scope>
</reference>
<reference key="7">
    <citation type="journal article" date="2009" name="Plant Physiol.">
        <title>Large-scale Arabidopsis phosphoproteome profiling reveals novel chloroplast kinase substrates and phosphorylation networks.</title>
        <authorList>
            <person name="Reiland S."/>
            <person name="Messerli G."/>
            <person name="Baerenfaller K."/>
            <person name="Gerrits B."/>
            <person name="Endler A."/>
            <person name="Grossmann J."/>
            <person name="Gruissem W."/>
            <person name="Baginsky S."/>
        </authorList>
    </citation>
    <scope>IDENTIFICATION BY MASS SPECTROMETRY [LARGE SCALE ANALYSIS]</scope>
</reference>
<protein>
    <recommendedName>
        <fullName>Sulfate transporter 4.1, chloroplastic</fullName>
    </recommendedName>
    <alternativeName>
        <fullName>AST82</fullName>
    </alternativeName>
</protein>
<evidence type="ECO:0000255" key="1"/>
<evidence type="ECO:0000255" key="2">
    <source>
        <dbReference type="PROSITE-ProRule" id="PRU00198"/>
    </source>
</evidence>
<evidence type="ECO:0000256" key="3">
    <source>
        <dbReference type="SAM" id="MobiDB-lite"/>
    </source>
</evidence>
<evidence type="ECO:0000269" key="4">
    <source>
    </source>
</evidence>
<evidence type="ECO:0000305" key="5"/>
<evidence type="ECO:0007829" key="6">
    <source>
        <dbReference type="PDB" id="7LHV"/>
    </source>
</evidence>
<organism>
    <name type="scientific">Arabidopsis thaliana</name>
    <name type="common">Mouse-ear cress</name>
    <dbReference type="NCBI Taxonomy" id="3702"/>
    <lineage>
        <taxon>Eukaryota</taxon>
        <taxon>Viridiplantae</taxon>
        <taxon>Streptophyta</taxon>
        <taxon>Embryophyta</taxon>
        <taxon>Tracheophyta</taxon>
        <taxon>Spermatophyta</taxon>
        <taxon>Magnoliopsida</taxon>
        <taxon>eudicotyledons</taxon>
        <taxon>Gunneridae</taxon>
        <taxon>Pentapetalae</taxon>
        <taxon>rosids</taxon>
        <taxon>malvids</taxon>
        <taxon>Brassicales</taxon>
        <taxon>Brassicaceae</taxon>
        <taxon>Camelineae</taxon>
        <taxon>Arabidopsis</taxon>
    </lineage>
</organism>
<name>SUT41_ARATH</name>
<accession>Q9FY46</accession>
<accession>O22123</accession>
<accession>Q8GW68</accession>
<accession>Q9FNB8</accession>
<keyword id="KW-0002">3D-structure</keyword>
<keyword id="KW-0150">Chloroplast</keyword>
<keyword id="KW-0472">Membrane</keyword>
<keyword id="KW-0934">Plastid</keyword>
<keyword id="KW-1185">Reference proteome</keyword>
<keyword id="KW-0346">Stress response</keyword>
<keyword id="KW-0764">Sulfate transport</keyword>
<keyword id="KW-0769">Symport</keyword>
<keyword id="KW-0809">Transit peptide</keyword>
<keyword id="KW-0812">Transmembrane</keyword>
<keyword id="KW-1133">Transmembrane helix</keyword>
<keyword id="KW-0813">Transport</keyword>
<sequence>MSYASLSVKDLTSLVSRSGTGSSSSLKPPGQTRPVKVIPLQHPDTSNEARPPSIPFDDIFSGWTAKIKRMRLVDWIDTLFPCFRWIRTYRWSEYFKLDLMAGITVGIMLVPQAMSYAKLAGLPPIYGLYSSFVPVFVYAIFGSSRQLAIGPVALVSLLVSNALGGIADTNEELHIELAILLALLVGILECIMGLLRLGWLIRFISHSVISGFTSASAIVIGLSQIKYFLGYSIARSSKIVPIVESIIAGADKFQWPPFVMGSLILVILQVMKHVGKAKKELQFLRAAAPLTGIVLGTTIAKVFHPPSISLVGEIPQGLPTFSFPRSFDHAKTLLPTSALITGVAILESVGIAKALAAKNRYELDSNSELFGLGVANILGSLFSAYPATGSFSRSAVNNESEAKTGLSGLITGIIIGCSLLFLTPMFKYIPQCALAAIVISAVSGLVDYDEAIFLWRVDKRDFSLWTITSTITLFFGIEIGVLVGVGFSLAFVIHESANPHIAVLGRLPGTTVYRNIKQYPEAYTYNGIVIVRIDSPIYFANISYIKDRLREYEVAVDKYTNRGLEVDRINFVILEMSPVTHIDSSAVEALKELYQEYKTRDIQLAISNPNKDVHLTIARSGMVELVGKEWFFVRVHDAVQVCLQYVQSSNLEDKHLSFTRRYGGSNNNSSSSNALLKEPLLSVEK</sequence>
<gene>
    <name type="primary">SULTR4;1</name>
    <name type="ordered locus">At5g13550</name>
    <name type="ORF">MSH12.1</name>
    <name type="ORF">T6I14_80</name>
</gene>
<comment type="function">
    <text>H(+)/sulfate cotransporter that may play a role in the regulation of sulfate assimilation.</text>
</comment>
<comment type="subcellular location">
    <subcellularLocation>
        <location evidence="5">Plastid</location>
        <location evidence="5">Chloroplast membrane</location>
        <topology evidence="5">Multi-pass membrane protein</topology>
    </subcellularLocation>
</comment>
<comment type="tissue specificity">
    <text>Expressed both in roots and leaves.</text>
</comment>
<comment type="induction">
    <text evidence="4">By sulfate starvation in leaves.</text>
</comment>
<comment type="similarity">
    <text evidence="5">Belongs to the SLC26A/SulP transporter (TC 2.A.53) family.</text>
</comment>
<comment type="sequence caution" evidence="5">
    <conflict type="erroneous termination">
        <sequence resource="EMBL-CDS" id="BAC43623"/>
    </conflict>
    <text>Truncated C-terminus.</text>
</comment>
<feature type="transit peptide" description="Chloroplast" evidence="1">
    <location>
        <begin position="1"/>
        <end position="23"/>
    </location>
</feature>
<feature type="chain" id="PRO_0000032664" description="Sulfate transporter 4.1, chloroplastic">
    <location>
        <begin position="24"/>
        <end position="685"/>
    </location>
</feature>
<feature type="transmembrane region" description="Helical" evidence="1">
    <location>
        <begin position="97"/>
        <end position="117"/>
    </location>
</feature>
<feature type="transmembrane region" description="Helical" evidence="1">
    <location>
        <begin position="122"/>
        <end position="142"/>
    </location>
</feature>
<feature type="transmembrane region" description="Helical" evidence="1">
    <location>
        <begin position="147"/>
        <end position="167"/>
    </location>
</feature>
<feature type="transmembrane region" description="Helical" evidence="1">
    <location>
        <begin position="175"/>
        <end position="195"/>
    </location>
</feature>
<feature type="transmembrane region" description="Helical" evidence="1">
    <location>
        <begin position="203"/>
        <end position="223"/>
    </location>
</feature>
<feature type="transmembrane region" description="Helical" evidence="1">
    <location>
        <begin position="255"/>
        <end position="275"/>
    </location>
</feature>
<feature type="transmembrane region" description="Helical" evidence="1">
    <location>
        <begin position="283"/>
        <end position="303"/>
    </location>
</feature>
<feature type="transmembrane region" description="Helical" evidence="1">
    <location>
        <begin position="332"/>
        <end position="352"/>
    </location>
</feature>
<feature type="transmembrane region" description="Helical" evidence="1">
    <location>
        <begin position="369"/>
        <end position="389"/>
    </location>
</feature>
<feature type="transmembrane region" description="Helical" evidence="1">
    <location>
        <begin position="406"/>
        <end position="426"/>
    </location>
</feature>
<feature type="transmembrane region" description="Helical" evidence="1">
    <location>
        <begin position="434"/>
        <end position="454"/>
    </location>
</feature>
<feature type="transmembrane region" description="Helical" evidence="1">
    <location>
        <begin position="473"/>
        <end position="493"/>
    </location>
</feature>
<feature type="domain" description="STAS" evidence="2">
    <location>
        <begin position="518"/>
        <end position="642"/>
    </location>
</feature>
<feature type="region of interest" description="Disordered" evidence="3">
    <location>
        <begin position="15"/>
        <end position="53"/>
    </location>
</feature>
<feature type="compositionally biased region" description="Low complexity" evidence="3">
    <location>
        <begin position="15"/>
        <end position="26"/>
    </location>
</feature>
<feature type="sequence conflict" description="In Ref. 5; BAC43623." evidence="5" ref="5">
    <original>L</original>
    <variation>Q</variation>
    <location>
        <position position="229"/>
    </location>
</feature>
<feature type="sequence conflict" description="In Ref. 1; BAA23424." evidence="5" ref="1">
    <original>A</original>
    <variation>P</variation>
    <location>
        <position position="344"/>
    </location>
</feature>
<feature type="sequence conflict" description="In Ref. 1; BAA23424." evidence="5" ref="1">
    <original>E</original>
    <variation>D</variation>
    <location>
        <position position="368"/>
    </location>
</feature>
<feature type="helix" evidence="6">
    <location>
        <begin position="72"/>
        <end position="79"/>
    </location>
</feature>
<feature type="helix" evidence="6">
    <location>
        <begin position="83"/>
        <end position="86"/>
    </location>
</feature>
<feature type="helix" evidence="6">
    <location>
        <begin position="91"/>
        <end position="119"/>
    </location>
</feature>
<feature type="helix" evidence="6">
    <location>
        <begin position="125"/>
        <end position="141"/>
    </location>
</feature>
<feature type="helix" evidence="6">
    <location>
        <begin position="153"/>
        <end position="166"/>
    </location>
</feature>
<feature type="helix" evidence="6">
    <location>
        <begin position="173"/>
        <end position="194"/>
    </location>
</feature>
<feature type="helix" evidence="6">
    <location>
        <begin position="198"/>
        <end position="200"/>
    </location>
</feature>
<feature type="turn" evidence="6">
    <location>
        <begin position="201"/>
        <end position="203"/>
    </location>
</feature>
<feature type="helix" evidence="6">
    <location>
        <begin position="206"/>
        <end position="229"/>
    </location>
</feature>
<feature type="helix" evidence="6">
    <location>
        <begin position="239"/>
        <end position="249"/>
    </location>
</feature>
<feature type="helix" evidence="6">
    <location>
        <begin position="250"/>
        <end position="252"/>
    </location>
</feature>
<feature type="helix" evidence="6">
    <location>
        <begin position="255"/>
        <end position="277"/>
    </location>
</feature>
<feature type="strand" evidence="6">
    <location>
        <begin position="278"/>
        <end position="280"/>
    </location>
</feature>
<feature type="helix" evidence="6">
    <location>
        <begin position="284"/>
        <end position="300"/>
    </location>
</feature>
<feature type="turn" evidence="6">
    <location>
        <begin position="301"/>
        <end position="303"/>
    </location>
</feature>
<feature type="helix" evidence="6">
    <location>
        <begin position="327"/>
        <end position="329"/>
    </location>
</feature>
<feature type="helix" evidence="6">
    <location>
        <begin position="330"/>
        <end position="346"/>
    </location>
</feature>
<feature type="helix" evidence="6">
    <location>
        <begin position="348"/>
        <end position="358"/>
    </location>
</feature>
<feature type="helix" evidence="6">
    <location>
        <begin position="365"/>
        <end position="381"/>
    </location>
</feature>
<feature type="helix" evidence="6">
    <location>
        <begin position="391"/>
        <end position="399"/>
    </location>
</feature>
<feature type="helix" evidence="6">
    <location>
        <begin position="406"/>
        <end position="421"/>
    </location>
</feature>
<feature type="helix" evidence="6">
    <location>
        <begin position="423"/>
        <end position="426"/>
    </location>
</feature>
<feature type="helix" evidence="6">
    <location>
        <begin position="431"/>
        <end position="443"/>
    </location>
</feature>
<feature type="helix" evidence="6">
    <location>
        <begin position="448"/>
        <end position="457"/>
    </location>
</feature>
<feature type="helix" evidence="6">
    <location>
        <begin position="459"/>
        <end position="474"/>
    </location>
</feature>
<feature type="helix" evidence="6">
    <location>
        <begin position="477"/>
        <end position="496"/>
    </location>
</feature>
<feature type="strand" evidence="6">
    <location>
        <begin position="501"/>
        <end position="504"/>
    </location>
</feature>
<feature type="turn" evidence="6">
    <location>
        <begin position="512"/>
        <end position="515"/>
    </location>
</feature>
<feature type="strand" evidence="6">
    <location>
        <begin position="527"/>
        <end position="533"/>
    </location>
</feature>
<feature type="turn" evidence="6">
    <location>
        <begin position="539"/>
        <end position="541"/>
    </location>
</feature>
<feature type="helix" evidence="6">
    <location>
        <begin position="542"/>
        <end position="560"/>
    </location>
</feature>
<feature type="strand" evidence="6">
    <location>
        <begin position="562"/>
        <end position="564"/>
    </location>
</feature>
<feature type="strand" evidence="6">
    <location>
        <begin position="569"/>
        <end position="575"/>
    </location>
</feature>
<feature type="helix" evidence="6">
    <location>
        <begin position="584"/>
        <end position="599"/>
    </location>
</feature>
<feature type="strand" evidence="6">
    <location>
        <begin position="603"/>
        <end position="606"/>
    </location>
</feature>
<feature type="helix" evidence="6">
    <location>
        <begin position="611"/>
        <end position="619"/>
    </location>
</feature>
<feature type="helix" evidence="6">
    <location>
        <begin position="622"/>
        <end position="626"/>
    </location>
</feature>
<feature type="helix" evidence="6">
    <location>
        <begin position="628"/>
        <end position="630"/>
    </location>
</feature>
<feature type="helix" evidence="6">
    <location>
        <begin position="635"/>
        <end position="643"/>
    </location>
</feature>
<proteinExistence type="evidence at protein level"/>